<name>RSMJ_NEIG2</name>
<proteinExistence type="inferred from homology"/>
<accession>B4RIY4</accession>
<reference key="1">
    <citation type="journal article" date="2008" name="J. Bacteriol.">
        <title>Complete genome sequence of Neisseria gonorrhoeae NCCP11945.</title>
        <authorList>
            <person name="Chung G.T."/>
            <person name="Yoo J.S."/>
            <person name="Oh H.B."/>
            <person name="Lee Y.S."/>
            <person name="Cha S.H."/>
            <person name="Kim S.J."/>
            <person name="Yoo C.K."/>
        </authorList>
    </citation>
    <scope>NUCLEOTIDE SEQUENCE [LARGE SCALE GENOMIC DNA]</scope>
    <source>
        <strain>NCCP11945</strain>
    </source>
</reference>
<sequence>MTDILIDDTATEAVRTLIRAFPLVPVSQPPEQGSYLLAEHDTVSLRLVGEKSNVIVDFTSGAAQYRRTKGGGELIAKAVNHTAHPTVWDATAGLGRDSFVLASLGLTVTAFEQHPAVACLLSDGIRRALLNPETQDTAARINLHFGNAAEQMPALVKTQGKPDIVYLDPMYPERRKSAAVKKEMAYFHRLVGEAQDEVILLHTARQTAKKRVVVKRPRLGEHLAGQAPAYQYTGKSTRFDVYLPYGADKG</sequence>
<dbReference type="EC" id="2.1.1.242" evidence="1"/>
<dbReference type="EMBL" id="CP001050">
    <property type="protein sequence ID" value="ACF28939.1"/>
    <property type="molecule type" value="Genomic_DNA"/>
</dbReference>
<dbReference type="RefSeq" id="WP_003690639.1">
    <property type="nucleotide sequence ID" value="NC_011035.1"/>
</dbReference>
<dbReference type="SMR" id="B4RIY4"/>
<dbReference type="KEGG" id="ngk:NGK_0245"/>
<dbReference type="HOGENOM" id="CLU_076324_1_0_4"/>
<dbReference type="Proteomes" id="UP000002564">
    <property type="component" value="Chromosome"/>
</dbReference>
<dbReference type="GO" id="GO:0005737">
    <property type="term" value="C:cytoplasm"/>
    <property type="evidence" value="ECO:0007669"/>
    <property type="project" value="UniProtKB-SubCell"/>
</dbReference>
<dbReference type="GO" id="GO:0008990">
    <property type="term" value="F:rRNA (guanine-N2-)-methyltransferase activity"/>
    <property type="evidence" value="ECO:0007669"/>
    <property type="project" value="UniProtKB-UniRule"/>
</dbReference>
<dbReference type="Gene3D" id="3.40.50.150">
    <property type="entry name" value="Vaccinia Virus protein VP39"/>
    <property type="match status" value="1"/>
</dbReference>
<dbReference type="Gene3D" id="3.40.1630.10">
    <property type="entry name" value="YhiQ-like domain"/>
    <property type="match status" value="1"/>
</dbReference>
<dbReference type="HAMAP" id="MF_01523">
    <property type="entry name" value="16SrRNA_methyltr_J"/>
    <property type="match status" value="1"/>
</dbReference>
<dbReference type="InterPro" id="IPR007536">
    <property type="entry name" value="16SrRNA_methylTrfase_J"/>
</dbReference>
<dbReference type="InterPro" id="IPR029063">
    <property type="entry name" value="SAM-dependent_MTases_sf"/>
</dbReference>
<dbReference type="PANTHER" id="PTHR36112">
    <property type="entry name" value="RIBOSOMAL RNA SMALL SUBUNIT METHYLTRANSFERASE J"/>
    <property type="match status" value="1"/>
</dbReference>
<dbReference type="PANTHER" id="PTHR36112:SF1">
    <property type="entry name" value="RIBOSOMAL RNA SMALL SUBUNIT METHYLTRANSFERASE J"/>
    <property type="match status" value="1"/>
</dbReference>
<dbReference type="Pfam" id="PF04445">
    <property type="entry name" value="SAM_MT"/>
    <property type="match status" value="1"/>
</dbReference>
<dbReference type="SUPFAM" id="SSF53335">
    <property type="entry name" value="S-adenosyl-L-methionine-dependent methyltransferases"/>
    <property type="match status" value="1"/>
</dbReference>
<evidence type="ECO:0000255" key="1">
    <source>
        <dbReference type="HAMAP-Rule" id="MF_01523"/>
    </source>
</evidence>
<comment type="function">
    <text evidence="1">Specifically methylates the guanosine in position 1516 of 16S rRNA.</text>
</comment>
<comment type="catalytic activity">
    <reaction evidence="1">
        <text>guanosine(1516) in 16S rRNA + S-adenosyl-L-methionine = N(2)-methylguanosine(1516) in 16S rRNA + S-adenosyl-L-homocysteine + H(+)</text>
        <dbReference type="Rhea" id="RHEA:43220"/>
        <dbReference type="Rhea" id="RHEA-COMP:10412"/>
        <dbReference type="Rhea" id="RHEA-COMP:10413"/>
        <dbReference type="ChEBI" id="CHEBI:15378"/>
        <dbReference type="ChEBI" id="CHEBI:57856"/>
        <dbReference type="ChEBI" id="CHEBI:59789"/>
        <dbReference type="ChEBI" id="CHEBI:74269"/>
        <dbReference type="ChEBI" id="CHEBI:74481"/>
        <dbReference type="EC" id="2.1.1.242"/>
    </reaction>
</comment>
<comment type="subcellular location">
    <subcellularLocation>
        <location evidence="1">Cytoplasm</location>
    </subcellularLocation>
</comment>
<comment type="similarity">
    <text evidence="1">Belongs to the methyltransferase superfamily. RsmJ family.</text>
</comment>
<feature type="chain" id="PRO_1000198502" description="Ribosomal RNA small subunit methyltransferase J">
    <location>
        <begin position="1"/>
        <end position="250"/>
    </location>
</feature>
<feature type="binding site" evidence="1">
    <location>
        <begin position="96"/>
        <end position="97"/>
    </location>
    <ligand>
        <name>S-adenosyl-L-methionine</name>
        <dbReference type="ChEBI" id="CHEBI:59789"/>
    </ligand>
</feature>
<feature type="binding site" evidence="1">
    <location>
        <position position="168"/>
    </location>
    <ligand>
        <name>S-adenosyl-L-methionine</name>
        <dbReference type="ChEBI" id="CHEBI:59789"/>
    </ligand>
</feature>
<keyword id="KW-0963">Cytoplasm</keyword>
<keyword id="KW-0489">Methyltransferase</keyword>
<keyword id="KW-0698">rRNA processing</keyword>
<keyword id="KW-0949">S-adenosyl-L-methionine</keyword>
<keyword id="KW-0808">Transferase</keyword>
<protein>
    <recommendedName>
        <fullName evidence="1">Ribosomal RNA small subunit methyltransferase J</fullName>
        <ecNumber evidence="1">2.1.1.242</ecNumber>
    </recommendedName>
    <alternativeName>
        <fullName evidence="1">16S rRNA m2G1516 methyltransferase</fullName>
    </alternativeName>
    <alternativeName>
        <fullName evidence="1">rRNA (guanine-N(2)-)-methyltransferase</fullName>
    </alternativeName>
</protein>
<gene>
    <name evidence="1" type="primary">rsmJ</name>
    <name type="ordered locus">NGK_0245</name>
</gene>
<organism>
    <name type="scientific">Neisseria gonorrhoeae (strain NCCP11945)</name>
    <dbReference type="NCBI Taxonomy" id="521006"/>
    <lineage>
        <taxon>Bacteria</taxon>
        <taxon>Pseudomonadati</taxon>
        <taxon>Pseudomonadota</taxon>
        <taxon>Betaproteobacteria</taxon>
        <taxon>Neisseriales</taxon>
        <taxon>Neisseriaceae</taxon>
        <taxon>Neisseria</taxon>
    </lineage>
</organism>